<evidence type="ECO:0000250" key="1"/>
<evidence type="ECO:0000269" key="2">
    <source>
    </source>
</evidence>
<evidence type="ECO:0000305" key="3"/>
<feature type="signal peptide" evidence="2">
    <location>
        <begin position="1"/>
        <end position="25"/>
    </location>
</feature>
<feature type="peptide" id="PRO_0000007016" description="Antimicrobial peptide THP1">
    <location>
        <begin position="26"/>
        <end position="60"/>
    </location>
</feature>
<feature type="propeptide" id="PRO_0000007017">
    <location>
        <begin position="61"/>
        <end position="65"/>
    </location>
</feature>
<feature type="disulfide bond" evidence="1">
    <location>
        <begin position="31"/>
        <end position="53"/>
    </location>
</feature>
<feature type="disulfide bond" evidence="1">
    <location>
        <begin position="38"/>
        <end position="59"/>
    </location>
</feature>
<feature type="disulfide bond" evidence="1">
    <location>
        <begin position="43"/>
        <end position="60"/>
    </location>
</feature>
<accession>P80391</accession>
<comment type="function">
    <text>Bactericidal activity; inhibits S.aureus and E.coli.</text>
</comment>
<comment type="subcellular location">
    <subcellularLocation>
        <location>Secreted</location>
    </subcellularLocation>
</comment>
<comment type="similarity">
    <text evidence="3">Belongs to the beta-defensin family.</text>
</comment>
<name>AMP1_MELGA</name>
<proteinExistence type="evidence at protein level"/>
<organism>
    <name type="scientific">Meleagris gallopavo</name>
    <name type="common">Wild turkey</name>
    <dbReference type="NCBI Taxonomy" id="9103"/>
    <lineage>
        <taxon>Eukaryota</taxon>
        <taxon>Metazoa</taxon>
        <taxon>Chordata</taxon>
        <taxon>Craniata</taxon>
        <taxon>Vertebrata</taxon>
        <taxon>Euteleostomi</taxon>
        <taxon>Archelosauria</taxon>
        <taxon>Archosauria</taxon>
        <taxon>Dinosauria</taxon>
        <taxon>Saurischia</taxon>
        <taxon>Theropoda</taxon>
        <taxon>Coelurosauria</taxon>
        <taxon>Aves</taxon>
        <taxon>Neognathae</taxon>
        <taxon>Galloanserae</taxon>
        <taxon>Galliformes</taxon>
        <taxon>Phasianidae</taxon>
        <taxon>Meleagridinae</taxon>
        <taxon>Meleagris</taxon>
    </lineage>
</organism>
<protein>
    <recommendedName>
        <fullName>Antimicrobial peptide THP1</fullName>
    </recommendedName>
    <alternativeName>
        <fullName>Turkey heterophil peptide 1</fullName>
    </alternativeName>
</protein>
<keyword id="KW-0044">Antibiotic</keyword>
<keyword id="KW-0929">Antimicrobial</keyword>
<keyword id="KW-0211">Defensin</keyword>
<keyword id="KW-0903">Direct protein sequencing</keyword>
<keyword id="KW-1015">Disulfide bond</keyword>
<keyword id="KW-1185">Reference proteome</keyword>
<keyword id="KW-0964">Secreted</keyword>
<keyword id="KW-0732">Signal</keyword>
<sequence length="65" mass="7086">MRIVYLLFPFILLLAQGAAGSSLALGKREKCLRRNGFCAFLKCPTLSVISGTCSRFQVCCKTLLG</sequence>
<dbReference type="EMBL" id="AF033337">
    <property type="protein sequence ID" value="AAC36053.1"/>
    <property type="molecule type" value="mRNA"/>
</dbReference>
<dbReference type="SMR" id="P80391"/>
<dbReference type="FunCoup" id="P80391">
    <property type="interactions" value="9"/>
</dbReference>
<dbReference type="Ensembl" id="ENSMGAT00000032643.1">
    <property type="protein sequence ID" value="ENSMGAP00000025020.1"/>
    <property type="gene ID" value="ENSMGAG00000021529.1"/>
</dbReference>
<dbReference type="GeneTree" id="ENSGT01030000235503"/>
<dbReference type="InParanoid" id="P80391"/>
<dbReference type="Proteomes" id="UP000001645">
    <property type="component" value="Chromosome 2"/>
</dbReference>
<dbReference type="GO" id="GO:0005615">
    <property type="term" value="C:extracellular space"/>
    <property type="evidence" value="ECO:0007669"/>
    <property type="project" value="TreeGrafter"/>
</dbReference>
<dbReference type="GO" id="GO:0031731">
    <property type="term" value="F:CCR6 chemokine receptor binding"/>
    <property type="evidence" value="ECO:0007669"/>
    <property type="project" value="TreeGrafter"/>
</dbReference>
<dbReference type="GO" id="GO:0042056">
    <property type="term" value="F:chemoattractant activity"/>
    <property type="evidence" value="ECO:0007669"/>
    <property type="project" value="TreeGrafter"/>
</dbReference>
<dbReference type="GO" id="GO:0060326">
    <property type="term" value="P:cell chemotaxis"/>
    <property type="evidence" value="ECO:0007669"/>
    <property type="project" value="TreeGrafter"/>
</dbReference>
<dbReference type="GO" id="GO:0042742">
    <property type="term" value="P:defense response to bacterium"/>
    <property type="evidence" value="ECO:0007669"/>
    <property type="project" value="UniProtKB-KW"/>
</dbReference>
<dbReference type="InterPro" id="IPR001855">
    <property type="entry name" value="Defensin_beta-like"/>
</dbReference>
<dbReference type="PANTHER" id="PTHR20515">
    <property type="entry name" value="BETA-DEFENSIN"/>
    <property type="match status" value="1"/>
</dbReference>
<dbReference type="PANTHER" id="PTHR20515:SF20">
    <property type="entry name" value="GALLINACIN-1-RELATED"/>
    <property type="match status" value="1"/>
</dbReference>
<dbReference type="Pfam" id="PF00711">
    <property type="entry name" value="Defensin_beta"/>
    <property type="match status" value="1"/>
</dbReference>
<dbReference type="SUPFAM" id="SSF57392">
    <property type="entry name" value="Defensin-like"/>
    <property type="match status" value="1"/>
</dbReference>
<reference key="1">
    <citation type="journal article" date="1998" name="Anim. Genet.">
        <title>Characterization of beta-defensin prepropeptide mRNA from chicken and turkey bone marrow.</title>
        <authorList>
            <person name="Brockus C.W."/>
            <person name="Harmon B.G."/>
            <person name="Jackwood M.W."/>
        </authorList>
    </citation>
    <scope>NUCLEOTIDE SEQUENCE [MRNA]</scope>
    <source>
        <tissue>Bone marrow</tissue>
    </source>
</reference>
<reference key="2">
    <citation type="journal article" date="1994" name="J. Leukoc. Biol.">
        <title>Isolation of antimicrobial peptides from avian heterophils.</title>
        <authorList>
            <person name="Evans E.W."/>
            <person name="Beach G.G."/>
            <person name="Wunderlich J."/>
            <person name="Harmon B.G."/>
        </authorList>
    </citation>
    <scope>PROTEIN SEQUENCE OF 26-60</scope>
</reference>